<evidence type="ECO:0000250" key="1">
    <source>
        <dbReference type="UniProtKB" id="P32455"/>
    </source>
</evidence>
<evidence type="ECO:0000250" key="2">
    <source>
        <dbReference type="UniProtKB" id="Q61107"/>
    </source>
</evidence>
<evidence type="ECO:0000255" key="3"/>
<evidence type="ECO:0000255" key="4">
    <source>
        <dbReference type="PROSITE-ProRule" id="PRU01052"/>
    </source>
</evidence>
<evidence type="ECO:0000269" key="5">
    <source>
    </source>
</evidence>
<evidence type="ECO:0000269" key="6">
    <source>
    </source>
</evidence>
<evidence type="ECO:0000269" key="7">
    <source>
    </source>
</evidence>
<evidence type="ECO:0000269" key="8">
    <source>
    </source>
</evidence>
<evidence type="ECO:0000269" key="9">
    <source>
    </source>
</evidence>
<evidence type="ECO:0000303" key="10">
    <source>
    </source>
</evidence>
<evidence type="ECO:0000305" key="11"/>
<feature type="chain" id="PRO_0000261159" description="Guanylate-binding protein 3">
    <location>
        <begin position="1"/>
        <end position="595"/>
    </location>
</feature>
<feature type="domain" description="GB1/RHD3-type G" evidence="4">
    <location>
        <begin position="35"/>
        <end position="276"/>
    </location>
</feature>
<feature type="region of interest" description="GTPase domain (Globular)" evidence="1">
    <location>
        <begin position="1"/>
        <end position="309"/>
    </location>
</feature>
<feature type="coiled-coil region" evidence="3">
    <location>
        <begin position="482"/>
        <end position="595"/>
    </location>
</feature>
<feature type="binding site" evidence="1">
    <location>
        <begin position="45"/>
        <end position="52"/>
    </location>
    <ligand>
        <name>GTP</name>
        <dbReference type="ChEBI" id="CHEBI:37565"/>
    </ligand>
</feature>
<feature type="binding site" evidence="1">
    <location>
        <begin position="67"/>
        <end position="69"/>
    </location>
    <ligand>
        <name>GTP</name>
        <dbReference type="ChEBI" id="CHEBI:37565"/>
    </ligand>
</feature>
<feature type="binding site" evidence="1">
    <location>
        <begin position="97"/>
        <end position="101"/>
    </location>
    <ligand>
        <name>GTP</name>
        <dbReference type="ChEBI" id="CHEBI:37565"/>
    </ligand>
</feature>
<feature type="splice variant" id="VSP_044360" description="In isoform 2." evidence="10">
    <location>
        <begin position="357"/>
        <end position="383"/>
    </location>
</feature>
<feature type="splice variant" id="VSP_044361" description="In isoform 2." evidence="10">
    <original>EQARVLKERCQGESTQLQNEIQKLQKTLKKKTKRYMSHKLKI</original>
    <variation>VSKCITLWFVFLFSLCSS</variation>
    <location>
        <begin position="554"/>
        <end position="595"/>
    </location>
</feature>
<feature type="sequence variant" id="VAR_054136" description="In dbSNP:rs4656078." evidence="5">
    <original>R</original>
    <variation>Q</variation>
    <location>
        <position position="221"/>
    </location>
</feature>
<feature type="sequence variant" id="VAR_054137" description="In dbSNP:rs4656077." evidence="5 8">
    <original>R</original>
    <variation>W</variation>
    <location>
        <position position="225"/>
    </location>
</feature>
<feature type="sequence variant" id="VAR_054138" description="In dbSNP:rs3188433.">
    <original>T</original>
    <variation>S</variation>
    <location>
        <position position="347"/>
    </location>
</feature>
<feature type="sequence variant" id="VAR_029082" description="In dbSNP:rs10493821.">
    <original>V</original>
    <variation>M</variation>
    <location>
        <position position="469"/>
    </location>
</feature>
<feature type="sequence variant" id="VAR_029083" description="In dbSNP:rs17433780.">
    <original>C</original>
    <variation>R</variation>
    <location>
        <position position="491"/>
    </location>
</feature>
<feature type="sequence variant" id="VAR_029084" description="In dbSNP:rs11808228.">
    <original>V</original>
    <variation>A</variation>
    <location>
        <position position="558"/>
    </location>
</feature>
<feature type="mutagenesis site" description="Promotes ubiquitination and degradation by S. flexneri IpaH9.8." evidence="9">
    <original>K</original>
    <variation>E</variation>
    <location>
        <position position="105"/>
    </location>
</feature>
<feature type="sequence conflict" description="In Ref. 5; AAH17992." evidence="11" ref="5">
    <original>I</original>
    <variation>T</variation>
    <location>
        <position position="271"/>
    </location>
</feature>
<feature type="sequence conflict" description="In Ref. 1; CAB66615 and 4; AAI40838." evidence="11" ref="1 4">
    <original>R</original>
    <variation>C</variation>
    <location>
        <position position="290"/>
    </location>
</feature>
<feature type="sequence conflict" description="In Ref. 5; AAH17992." evidence="11" ref="5">
    <original>D</original>
    <variation>G</variation>
    <location>
        <position position="334"/>
    </location>
</feature>
<reference key="1">
    <citation type="journal article" date="2012" name="FASEB J.">
        <title>A new splice variant of the human guanylate-binding protein 3 mediates anti-influenza activity through inhibition of viral transcription and replication.</title>
        <authorList>
            <person name="Nordmann A."/>
            <person name="Wixler L."/>
            <person name="Boergeling Y."/>
            <person name="Wixler V."/>
            <person name="Ludwig S."/>
        </authorList>
    </citation>
    <scope>NUCLEOTIDE SEQUENCE [MRNA] (ISOFORM 2)</scope>
    <scope>FUNCTION</scope>
    <scope>VARIANT TRP-225</scope>
    <scope>ALTERNATIVE SPLICING</scope>
</reference>
<reference key="2">
    <citation type="journal article" date="2001" name="Genome Res.">
        <title>Towards a catalog of human genes and proteins: sequencing and analysis of 500 novel complete protein coding human cDNAs.</title>
        <authorList>
            <person name="Wiemann S."/>
            <person name="Weil B."/>
            <person name="Wellenreuther R."/>
            <person name="Gassenhuber J."/>
            <person name="Glassl S."/>
            <person name="Ansorge W."/>
            <person name="Boecher M."/>
            <person name="Bloecker H."/>
            <person name="Bauersachs S."/>
            <person name="Blum H."/>
            <person name="Lauber J."/>
            <person name="Duesterhoeft A."/>
            <person name="Beyer A."/>
            <person name="Koehrer K."/>
            <person name="Strack N."/>
            <person name="Mewes H.-W."/>
            <person name="Ottenwaelder B."/>
            <person name="Obermaier B."/>
            <person name="Tampe J."/>
            <person name="Heubner D."/>
            <person name="Wambutt R."/>
            <person name="Korn B."/>
            <person name="Klein M."/>
            <person name="Poustka A."/>
        </authorList>
    </citation>
    <scope>NUCLEOTIDE SEQUENCE [LARGE SCALE MRNA] (ISOFORM 1)</scope>
    <source>
        <tissue>Brain</tissue>
    </source>
</reference>
<reference key="3">
    <citation type="journal article" date="2006" name="Nature">
        <title>The DNA sequence and biological annotation of human chromosome 1.</title>
        <authorList>
            <person name="Gregory S.G."/>
            <person name="Barlow K.F."/>
            <person name="McLay K.E."/>
            <person name="Kaul R."/>
            <person name="Swarbreck D."/>
            <person name="Dunham A."/>
            <person name="Scott C.E."/>
            <person name="Howe K.L."/>
            <person name="Woodfine K."/>
            <person name="Spencer C.C.A."/>
            <person name="Jones M.C."/>
            <person name="Gillson C."/>
            <person name="Searle S."/>
            <person name="Zhou Y."/>
            <person name="Kokocinski F."/>
            <person name="McDonald L."/>
            <person name="Evans R."/>
            <person name="Phillips K."/>
            <person name="Atkinson A."/>
            <person name="Cooper R."/>
            <person name="Jones C."/>
            <person name="Hall R.E."/>
            <person name="Andrews T.D."/>
            <person name="Lloyd C."/>
            <person name="Ainscough R."/>
            <person name="Almeida J.P."/>
            <person name="Ambrose K.D."/>
            <person name="Anderson F."/>
            <person name="Andrew R.W."/>
            <person name="Ashwell R.I.S."/>
            <person name="Aubin K."/>
            <person name="Babbage A.K."/>
            <person name="Bagguley C.L."/>
            <person name="Bailey J."/>
            <person name="Beasley H."/>
            <person name="Bethel G."/>
            <person name="Bird C.P."/>
            <person name="Bray-Allen S."/>
            <person name="Brown J.Y."/>
            <person name="Brown A.J."/>
            <person name="Buckley D."/>
            <person name="Burton J."/>
            <person name="Bye J."/>
            <person name="Carder C."/>
            <person name="Chapman J.C."/>
            <person name="Clark S.Y."/>
            <person name="Clarke G."/>
            <person name="Clee C."/>
            <person name="Cobley V."/>
            <person name="Collier R.E."/>
            <person name="Corby N."/>
            <person name="Coville G.J."/>
            <person name="Davies J."/>
            <person name="Deadman R."/>
            <person name="Dunn M."/>
            <person name="Earthrowl M."/>
            <person name="Ellington A.G."/>
            <person name="Errington H."/>
            <person name="Frankish A."/>
            <person name="Frankland J."/>
            <person name="French L."/>
            <person name="Garner P."/>
            <person name="Garnett J."/>
            <person name="Gay L."/>
            <person name="Ghori M.R.J."/>
            <person name="Gibson R."/>
            <person name="Gilby L.M."/>
            <person name="Gillett W."/>
            <person name="Glithero R.J."/>
            <person name="Grafham D.V."/>
            <person name="Griffiths C."/>
            <person name="Griffiths-Jones S."/>
            <person name="Grocock R."/>
            <person name="Hammond S."/>
            <person name="Harrison E.S.I."/>
            <person name="Hart E."/>
            <person name="Haugen E."/>
            <person name="Heath P.D."/>
            <person name="Holmes S."/>
            <person name="Holt K."/>
            <person name="Howden P.J."/>
            <person name="Hunt A.R."/>
            <person name="Hunt S.E."/>
            <person name="Hunter G."/>
            <person name="Isherwood J."/>
            <person name="James R."/>
            <person name="Johnson C."/>
            <person name="Johnson D."/>
            <person name="Joy A."/>
            <person name="Kay M."/>
            <person name="Kershaw J.K."/>
            <person name="Kibukawa M."/>
            <person name="Kimberley A.M."/>
            <person name="King A."/>
            <person name="Knights A.J."/>
            <person name="Lad H."/>
            <person name="Laird G."/>
            <person name="Lawlor S."/>
            <person name="Leongamornlert D.A."/>
            <person name="Lloyd D.M."/>
            <person name="Loveland J."/>
            <person name="Lovell J."/>
            <person name="Lush M.J."/>
            <person name="Lyne R."/>
            <person name="Martin S."/>
            <person name="Mashreghi-Mohammadi M."/>
            <person name="Matthews L."/>
            <person name="Matthews N.S.W."/>
            <person name="McLaren S."/>
            <person name="Milne S."/>
            <person name="Mistry S."/>
            <person name="Moore M.J.F."/>
            <person name="Nickerson T."/>
            <person name="O'Dell C.N."/>
            <person name="Oliver K."/>
            <person name="Palmeiri A."/>
            <person name="Palmer S.A."/>
            <person name="Parker A."/>
            <person name="Patel D."/>
            <person name="Pearce A.V."/>
            <person name="Peck A.I."/>
            <person name="Pelan S."/>
            <person name="Phelps K."/>
            <person name="Phillimore B.J."/>
            <person name="Plumb R."/>
            <person name="Rajan J."/>
            <person name="Raymond C."/>
            <person name="Rouse G."/>
            <person name="Saenphimmachak C."/>
            <person name="Sehra H.K."/>
            <person name="Sheridan E."/>
            <person name="Shownkeen R."/>
            <person name="Sims S."/>
            <person name="Skuce C.D."/>
            <person name="Smith M."/>
            <person name="Steward C."/>
            <person name="Subramanian S."/>
            <person name="Sycamore N."/>
            <person name="Tracey A."/>
            <person name="Tromans A."/>
            <person name="Van Helmond Z."/>
            <person name="Wall M."/>
            <person name="Wallis J.M."/>
            <person name="White S."/>
            <person name="Whitehead S.L."/>
            <person name="Wilkinson J.E."/>
            <person name="Willey D.L."/>
            <person name="Williams H."/>
            <person name="Wilming L."/>
            <person name="Wray P.W."/>
            <person name="Wu Z."/>
            <person name="Coulson A."/>
            <person name="Vaudin M."/>
            <person name="Sulston J.E."/>
            <person name="Durbin R.M."/>
            <person name="Hubbard T."/>
            <person name="Wooster R."/>
            <person name="Dunham I."/>
            <person name="Carter N.P."/>
            <person name="McVean G."/>
            <person name="Ross M.T."/>
            <person name="Harrow J."/>
            <person name="Olson M.V."/>
            <person name="Beck S."/>
            <person name="Rogers J."/>
            <person name="Bentley D.R."/>
        </authorList>
    </citation>
    <scope>NUCLEOTIDE SEQUENCE [LARGE SCALE GENOMIC DNA]</scope>
</reference>
<reference key="4">
    <citation type="submission" date="2005-09" db="EMBL/GenBank/DDBJ databases">
        <authorList>
            <person name="Mural R.J."/>
            <person name="Istrail S."/>
            <person name="Sutton G.G."/>
            <person name="Florea L."/>
            <person name="Halpern A.L."/>
            <person name="Mobarry C.M."/>
            <person name="Lippert R."/>
            <person name="Walenz B."/>
            <person name="Shatkay H."/>
            <person name="Dew I."/>
            <person name="Miller J.R."/>
            <person name="Flanigan M.J."/>
            <person name="Edwards N.J."/>
            <person name="Bolanos R."/>
            <person name="Fasulo D."/>
            <person name="Halldorsson B.V."/>
            <person name="Hannenhalli S."/>
            <person name="Turner R."/>
            <person name="Yooseph S."/>
            <person name="Lu F."/>
            <person name="Nusskern D.R."/>
            <person name="Shue B.C."/>
            <person name="Zheng X.H."/>
            <person name="Zhong F."/>
            <person name="Delcher A.L."/>
            <person name="Huson D.H."/>
            <person name="Kravitz S.A."/>
            <person name="Mouchard L."/>
            <person name="Reinert K."/>
            <person name="Remington K.A."/>
            <person name="Clark A.G."/>
            <person name="Waterman M.S."/>
            <person name="Eichler E.E."/>
            <person name="Adams M.D."/>
            <person name="Hunkapiller M.W."/>
            <person name="Myers E.W."/>
            <person name="Venter J.C."/>
        </authorList>
    </citation>
    <scope>NUCLEOTIDE SEQUENCE [LARGE SCALE GENOMIC DNA]</scope>
</reference>
<reference key="5">
    <citation type="journal article" date="2004" name="Genome Res.">
        <title>The status, quality, and expansion of the NIH full-length cDNA project: the Mammalian Gene Collection (MGC).</title>
        <authorList>
            <consortium name="The MGC Project Team"/>
        </authorList>
    </citation>
    <scope>NUCLEOTIDE SEQUENCE [LARGE SCALE MRNA] (ISOFORM 1)</scope>
    <scope>VARIANTS GLN-221 AND TRP-225</scope>
    <source>
        <tissue>Prostate</tissue>
    </source>
</reference>
<reference key="6">
    <citation type="journal article" date="2007" name="J. Interferon Cytokine Res.">
        <title>Unique features of different members of the human guanylate-binding protein family.</title>
        <authorList>
            <person name="Tripal P."/>
            <person name="Bauer M."/>
            <person name="Naschberger E."/>
            <person name="Mortinger T."/>
            <person name="Hohenadl C."/>
            <person name="Cornali E."/>
            <person name="Thurau M."/>
            <person name="Sturzl M."/>
        </authorList>
    </citation>
    <scope>SUBCELLULAR LOCATION</scope>
    <scope>INDUCTION</scope>
</reference>
<reference key="7">
    <citation type="journal article" date="2010" name="PLoS ONE">
        <title>Intracellular trafficking of guanylate-binding proteins is regulated by heterodimerization in a hierarchical manner.</title>
        <authorList>
            <person name="Britzen-Laurent N."/>
            <person name="Bauer M."/>
            <person name="Berton V."/>
            <person name="Fischer N."/>
            <person name="Syguda A."/>
            <person name="Reipschlager S."/>
            <person name="Naschberger E."/>
            <person name="Herrmann C."/>
            <person name="Sturzl M."/>
        </authorList>
    </citation>
    <scope>SUBCELLULAR LOCATION</scope>
    <scope>DIMERIZATION</scope>
</reference>
<reference key="8">
    <citation type="journal article" date="2019" name="PLoS Pathog.">
        <title>Structural mechanism for guanylate-binding proteins (GBPs) targeting by the Shigella E3 ligase IpaH9.8.</title>
        <authorList>
            <person name="Ji C."/>
            <person name="Du S."/>
            <person name="Li P."/>
            <person name="Zhu Q."/>
            <person name="Yang X."/>
            <person name="Long C."/>
            <person name="Yu J."/>
            <person name="Shao F."/>
            <person name="Xiao J."/>
        </authorList>
    </citation>
    <scope>MUTAGENESIS OF LYS-105</scope>
</reference>
<dbReference type="EC" id="3.6.5.-" evidence="2"/>
<dbReference type="EMBL" id="JF927951">
    <property type="protein sequence ID" value="AEI54565.1"/>
    <property type="molecule type" value="mRNA"/>
</dbReference>
<dbReference type="EMBL" id="AL136680">
    <property type="protein sequence ID" value="CAB66615.1"/>
    <property type="status" value="ALT_SEQ"/>
    <property type="molecule type" value="mRNA"/>
</dbReference>
<dbReference type="EMBL" id="AL139416">
    <property type="status" value="NOT_ANNOTATED_CDS"/>
    <property type="molecule type" value="Genomic_DNA"/>
</dbReference>
<dbReference type="EMBL" id="AL160008">
    <property type="status" value="NOT_ANNOTATED_CDS"/>
    <property type="molecule type" value="Genomic_DNA"/>
</dbReference>
<dbReference type="EMBL" id="CH471097">
    <property type="protein sequence ID" value="EAW73151.1"/>
    <property type="status" value="ALT_SEQ"/>
    <property type="molecule type" value="Genomic_DNA"/>
</dbReference>
<dbReference type="EMBL" id="BC017992">
    <property type="protein sequence ID" value="AAH17992.1"/>
    <property type="status" value="ALT_SEQ"/>
    <property type="molecule type" value="mRNA"/>
</dbReference>
<dbReference type="EMBL" id="BC140837">
    <property type="protein sequence ID" value="AAI40838.1"/>
    <property type="molecule type" value="mRNA"/>
</dbReference>
<dbReference type="CCDS" id="CCDS717.2">
    <molecule id="Q9H0R5-1"/>
</dbReference>
<dbReference type="RefSeq" id="NP_001306110.1">
    <molecule id="Q9H0R5-4"/>
    <property type="nucleotide sequence ID" value="NM_001319181.2"/>
</dbReference>
<dbReference type="RefSeq" id="NP_060754.2">
    <molecule id="Q9H0R5-1"/>
    <property type="nucleotide sequence ID" value="NM_018284.3"/>
</dbReference>
<dbReference type="SMR" id="Q9H0R5"/>
<dbReference type="BioGRID" id="108905">
    <property type="interactions" value="9"/>
</dbReference>
<dbReference type="FunCoup" id="Q9H0R5">
    <property type="interactions" value="498"/>
</dbReference>
<dbReference type="IntAct" id="Q9H0R5">
    <property type="interactions" value="10"/>
</dbReference>
<dbReference type="MINT" id="Q9H0R5"/>
<dbReference type="STRING" id="9606.ENSP00000359512"/>
<dbReference type="iPTMnet" id="Q9H0R5"/>
<dbReference type="PhosphoSitePlus" id="Q9H0R5"/>
<dbReference type="BioMuta" id="GBP3"/>
<dbReference type="DMDM" id="221222526"/>
<dbReference type="jPOST" id="Q9H0R5"/>
<dbReference type="MassIVE" id="Q9H0R5"/>
<dbReference type="PaxDb" id="9606-ENSP00000359512"/>
<dbReference type="PeptideAtlas" id="Q9H0R5"/>
<dbReference type="ProteomicsDB" id="80318">
    <molecule id="Q9H0R5-1"/>
</dbReference>
<dbReference type="Antibodypedia" id="51594">
    <property type="antibodies" value="146 antibodies from 27 providers"/>
</dbReference>
<dbReference type="DNASU" id="2635"/>
<dbReference type="Ensembl" id="ENST00000370481.9">
    <molecule id="Q9H0R5-1"/>
    <property type="protein sequence ID" value="ENSP00000359512.4"/>
    <property type="gene ID" value="ENSG00000117226.13"/>
</dbReference>
<dbReference type="GeneID" id="2635"/>
<dbReference type="KEGG" id="hsa:2635"/>
<dbReference type="MANE-Select" id="ENST00000370481.9">
    <property type="protein sequence ID" value="ENSP00000359512.4"/>
    <property type="RefSeq nucleotide sequence ID" value="NM_018284.3"/>
    <property type="RefSeq protein sequence ID" value="NP_060754.2"/>
</dbReference>
<dbReference type="UCSC" id="uc001dmt.4">
    <molecule id="Q9H0R5-1"/>
    <property type="organism name" value="human"/>
</dbReference>
<dbReference type="AGR" id="HGNC:4184"/>
<dbReference type="CTD" id="2635"/>
<dbReference type="DisGeNET" id="2635"/>
<dbReference type="GeneCards" id="GBP3"/>
<dbReference type="HGNC" id="HGNC:4184">
    <property type="gene designation" value="GBP3"/>
</dbReference>
<dbReference type="HPA" id="ENSG00000117226">
    <property type="expression patterns" value="Tissue enhanced (intestine)"/>
</dbReference>
<dbReference type="MIM" id="600413">
    <property type="type" value="gene"/>
</dbReference>
<dbReference type="neXtProt" id="NX_Q9H0R5"/>
<dbReference type="OpenTargets" id="ENSG00000117226"/>
<dbReference type="PharmGKB" id="PA28598"/>
<dbReference type="VEuPathDB" id="HostDB:ENSG00000117226"/>
<dbReference type="eggNOG" id="KOG2037">
    <property type="taxonomic scope" value="Eukaryota"/>
</dbReference>
<dbReference type="GeneTree" id="ENSGT00940000164799"/>
<dbReference type="HOGENOM" id="CLU_018608_2_2_1"/>
<dbReference type="InParanoid" id="Q9H0R5"/>
<dbReference type="OMA" id="FESGRNK"/>
<dbReference type="OrthoDB" id="2135133at2759"/>
<dbReference type="PAN-GO" id="Q9H0R5">
    <property type="GO annotations" value="4 GO annotations based on evolutionary models"/>
</dbReference>
<dbReference type="PhylomeDB" id="Q9H0R5"/>
<dbReference type="TreeFam" id="TF331602"/>
<dbReference type="PathwayCommons" id="Q9H0R5"/>
<dbReference type="Reactome" id="R-HSA-877300">
    <property type="pathway name" value="Interferon gamma signaling"/>
</dbReference>
<dbReference type="SignaLink" id="Q9H0R5"/>
<dbReference type="BioGRID-ORCS" id="2635">
    <property type="hits" value="14 hits in 1152 CRISPR screens"/>
</dbReference>
<dbReference type="ChiTaRS" id="GBP3">
    <property type="organism name" value="human"/>
</dbReference>
<dbReference type="GenomeRNAi" id="2635"/>
<dbReference type="Pharos" id="Q9H0R5">
    <property type="development level" value="Tbio"/>
</dbReference>
<dbReference type="PRO" id="PR:Q9H0R5"/>
<dbReference type="Proteomes" id="UP000005640">
    <property type="component" value="Chromosome 1"/>
</dbReference>
<dbReference type="RNAct" id="Q9H0R5">
    <property type="molecule type" value="protein"/>
</dbReference>
<dbReference type="Bgee" id="ENSG00000117226">
    <property type="expression patterns" value="Expressed in ileal mucosa and 185 other cell types or tissues"/>
</dbReference>
<dbReference type="ExpressionAtlas" id="Q9H0R5">
    <property type="expression patterns" value="baseline and differential"/>
</dbReference>
<dbReference type="GO" id="GO:0005737">
    <property type="term" value="C:cytoplasm"/>
    <property type="evidence" value="ECO:0000314"/>
    <property type="project" value="UniProtKB"/>
</dbReference>
<dbReference type="GO" id="GO:0031410">
    <property type="term" value="C:cytoplasmic vesicle"/>
    <property type="evidence" value="ECO:0000318"/>
    <property type="project" value="GO_Central"/>
</dbReference>
<dbReference type="GO" id="GO:0005829">
    <property type="term" value="C:cytosol"/>
    <property type="evidence" value="ECO:0000314"/>
    <property type="project" value="UniProtKB"/>
</dbReference>
<dbReference type="GO" id="GO:0000139">
    <property type="term" value="C:Golgi membrane"/>
    <property type="evidence" value="ECO:0007669"/>
    <property type="project" value="UniProtKB-SubCell"/>
</dbReference>
<dbReference type="GO" id="GO:0048471">
    <property type="term" value="C:perinuclear region of cytoplasm"/>
    <property type="evidence" value="ECO:0007669"/>
    <property type="project" value="UniProtKB-SubCell"/>
</dbReference>
<dbReference type="GO" id="GO:0005525">
    <property type="term" value="F:GTP binding"/>
    <property type="evidence" value="ECO:0000318"/>
    <property type="project" value="GO_Central"/>
</dbReference>
<dbReference type="GO" id="GO:0003924">
    <property type="term" value="F:GTPase activity"/>
    <property type="evidence" value="ECO:0000318"/>
    <property type="project" value="GO_Central"/>
</dbReference>
<dbReference type="GO" id="GO:0042802">
    <property type="term" value="F:identical protein binding"/>
    <property type="evidence" value="ECO:0000353"/>
    <property type="project" value="IntAct"/>
</dbReference>
<dbReference type="GO" id="GO:0042803">
    <property type="term" value="F:protein homodimerization activity"/>
    <property type="evidence" value="ECO:0000314"/>
    <property type="project" value="UniProtKB"/>
</dbReference>
<dbReference type="GO" id="GO:0071347">
    <property type="term" value="P:cellular response to interleukin-1"/>
    <property type="evidence" value="ECO:0000270"/>
    <property type="project" value="UniProtKB"/>
</dbReference>
<dbReference type="GO" id="GO:0071222">
    <property type="term" value="P:cellular response to lipopolysaccharide"/>
    <property type="evidence" value="ECO:0000250"/>
    <property type="project" value="UniProtKB"/>
</dbReference>
<dbReference type="GO" id="GO:0071356">
    <property type="term" value="P:cellular response to tumor necrosis factor"/>
    <property type="evidence" value="ECO:0000270"/>
    <property type="project" value="UniProtKB"/>
</dbReference>
<dbReference type="GO" id="GO:0071346">
    <property type="term" value="P:cellular response to type II interferon"/>
    <property type="evidence" value="ECO:0000318"/>
    <property type="project" value="GO_Central"/>
</dbReference>
<dbReference type="GO" id="GO:0051715">
    <property type="term" value="P:cytolysis in another organism"/>
    <property type="evidence" value="ECO:0000250"/>
    <property type="project" value="UniProtKB"/>
</dbReference>
<dbReference type="GO" id="GO:0042742">
    <property type="term" value="P:defense response to bacterium"/>
    <property type="evidence" value="ECO:0000250"/>
    <property type="project" value="UniProtKB"/>
</dbReference>
<dbReference type="GO" id="GO:0051607">
    <property type="term" value="P:defense response to virus"/>
    <property type="evidence" value="ECO:0007669"/>
    <property type="project" value="UniProtKB-KW"/>
</dbReference>
<dbReference type="GO" id="GO:0140639">
    <property type="term" value="P:positive regulation of pyroptotic inflammatory response"/>
    <property type="evidence" value="ECO:0000250"/>
    <property type="project" value="UniProtKB"/>
</dbReference>
<dbReference type="CDD" id="cd01851">
    <property type="entry name" value="GBP"/>
    <property type="match status" value="1"/>
</dbReference>
<dbReference type="CDD" id="cd16269">
    <property type="entry name" value="GBP_C"/>
    <property type="match status" value="1"/>
</dbReference>
<dbReference type="FunFam" id="1.20.1000.10:FF:000001">
    <property type="entry name" value="Guanylate binding protein 1"/>
    <property type="match status" value="1"/>
</dbReference>
<dbReference type="FunFam" id="3.40.50.300:FF:000422">
    <property type="entry name" value="Guanylate-binding protein 1"/>
    <property type="match status" value="1"/>
</dbReference>
<dbReference type="Gene3D" id="1.20.1000.10">
    <property type="entry name" value="Guanylate-binding protein, C-terminal domain"/>
    <property type="match status" value="1"/>
</dbReference>
<dbReference type="Gene3D" id="3.40.50.300">
    <property type="entry name" value="P-loop containing nucleotide triphosphate hydrolases"/>
    <property type="match status" value="1"/>
</dbReference>
<dbReference type="InterPro" id="IPR030386">
    <property type="entry name" value="G_GB1_RHD3_dom"/>
</dbReference>
<dbReference type="InterPro" id="IPR037684">
    <property type="entry name" value="GBP_C"/>
</dbReference>
<dbReference type="InterPro" id="IPR003191">
    <property type="entry name" value="Guanylate-bd/ATL_C"/>
</dbReference>
<dbReference type="InterPro" id="IPR036543">
    <property type="entry name" value="Guanylate-bd_C_sf"/>
</dbReference>
<dbReference type="InterPro" id="IPR015894">
    <property type="entry name" value="Guanylate-bd_N"/>
</dbReference>
<dbReference type="InterPro" id="IPR027417">
    <property type="entry name" value="P-loop_NTPase"/>
</dbReference>
<dbReference type="PANTHER" id="PTHR10751">
    <property type="entry name" value="GUANYLATE BINDING PROTEIN"/>
    <property type="match status" value="1"/>
</dbReference>
<dbReference type="Pfam" id="PF02263">
    <property type="entry name" value="GBP"/>
    <property type="match status" value="1"/>
</dbReference>
<dbReference type="Pfam" id="PF02841">
    <property type="entry name" value="GBP_C"/>
    <property type="match status" value="1"/>
</dbReference>
<dbReference type="SUPFAM" id="SSF48340">
    <property type="entry name" value="Interferon-induced guanylate-binding protein 1 (GBP1), C-terminal domain"/>
    <property type="match status" value="1"/>
</dbReference>
<dbReference type="SUPFAM" id="SSF52540">
    <property type="entry name" value="P-loop containing nucleoside triphosphate hydrolases"/>
    <property type="match status" value="1"/>
</dbReference>
<dbReference type="PROSITE" id="PS51715">
    <property type="entry name" value="G_GB1_RHD3"/>
    <property type="match status" value="1"/>
</dbReference>
<organism>
    <name type="scientific">Homo sapiens</name>
    <name type="common">Human</name>
    <dbReference type="NCBI Taxonomy" id="9606"/>
    <lineage>
        <taxon>Eukaryota</taxon>
        <taxon>Metazoa</taxon>
        <taxon>Chordata</taxon>
        <taxon>Craniata</taxon>
        <taxon>Vertebrata</taxon>
        <taxon>Euteleostomi</taxon>
        <taxon>Mammalia</taxon>
        <taxon>Eutheria</taxon>
        <taxon>Euarchontoglires</taxon>
        <taxon>Primates</taxon>
        <taxon>Haplorrhini</taxon>
        <taxon>Catarrhini</taxon>
        <taxon>Hominidae</taxon>
        <taxon>Homo</taxon>
    </lineage>
</organism>
<gene>
    <name type="primary">GBP3</name>
</gene>
<comment type="function">
    <text evidence="2 8">Interferon (IFN)-inducible GTPase that plays important roles in innate immunity against a diverse range of bacterial, viral and protozoan pathogens (PubMed:22106366). Hydrolyzes GTP very efficiently; GDP rather than GMP is the major reaction product (By similarity). Following infection, recruited to the pathogen-containing vacuoles or vacuole-escaped bacteria and acts as a positive regulator of inflammasome assembly by promoting the release of inflammasome ligands from bacteria (By similarity). Acts by promoting lysis of pathogen-containing vacuoles, releasing pathogens into the cytosol (By similarity). Following pathogen release in the cytosol, promotes recruitment of proteins that mediate bacterial cytolysis: this liberates ligands that are detected by inflammasomes, such as lipopolysaccharide (LPS) that activates the non-canonical CASP4/CASP11 inflammasome or double-stranded DNA (dsDNA) that activates the AIM2 inflammasome (By similarity). Exhibits antiviral activity against influenza virus (PubMed:22106366).</text>
</comment>
<comment type="function">
    <molecule>Isoform 2</molecule>
    <text evidence="8">Shows the most prominent antiviral activity in epithelial cells.</text>
</comment>
<comment type="catalytic activity">
    <reaction evidence="2">
        <text>GTP + H2O = GDP + phosphate + H(+)</text>
        <dbReference type="Rhea" id="RHEA:19669"/>
        <dbReference type="ChEBI" id="CHEBI:15377"/>
        <dbReference type="ChEBI" id="CHEBI:15378"/>
        <dbReference type="ChEBI" id="CHEBI:37565"/>
        <dbReference type="ChEBI" id="CHEBI:43474"/>
        <dbReference type="ChEBI" id="CHEBI:58189"/>
    </reaction>
</comment>
<comment type="subunit">
    <text evidence="7">Heterodimer with other family members, including GBP1, GBP2 and GBP5 (PubMed:21151871). Dimerization regulates subcellular location.</text>
</comment>
<comment type="interaction">
    <interactant intactId="EBI-2798916">
        <id>Q9H0R5</id>
    </interactant>
    <interactant intactId="EBI-2869161">
        <id>P32455</id>
        <label>GBP1</label>
    </interactant>
    <organismsDiffer>false</organismsDiffer>
    <experiments>5</experiments>
</comment>
<comment type="interaction">
    <interactant intactId="EBI-2798916">
        <id>Q9H0R5</id>
    </interactant>
    <interactant intactId="EBI-714388">
        <id>P32456</id>
        <label>GBP2</label>
    </interactant>
    <organismsDiffer>false</organismsDiffer>
    <experiments>5</experiments>
</comment>
<comment type="interaction">
    <interactant intactId="EBI-2798916">
        <id>Q9H0R5</id>
    </interactant>
    <interactant intactId="EBI-2798916">
        <id>Q9H0R5</id>
        <label>GBP3</label>
    </interactant>
    <organismsDiffer>false</organismsDiffer>
    <experiments>2</experiments>
</comment>
<comment type="interaction">
    <interactant intactId="EBI-2798916">
        <id>Q9H0R5</id>
    </interactant>
    <interactant intactId="EBI-749932">
        <id>Q96PP8</id>
        <label>GBP5</label>
    </interactant>
    <organismsDiffer>false</organismsDiffer>
    <experiments>2</experiments>
</comment>
<comment type="interaction">
    <interactant intactId="EBI-2798916">
        <id>Q9H0R5</id>
    </interactant>
    <interactant intactId="EBI-2511133">
        <id>O95819</id>
        <label>MAP4K4</label>
    </interactant>
    <organismsDiffer>false</organismsDiffer>
    <experiments>4</experiments>
</comment>
<comment type="subcellular location">
    <subcellularLocation>
        <location evidence="6">Cytoplasm</location>
    </subcellularLocation>
    <subcellularLocation>
        <location evidence="7">Cytoplasm</location>
        <location evidence="7">Perinuclear region</location>
    </subcellularLocation>
    <subcellularLocation>
        <location evidence="7">Golgi apparatus membrane</location>
    </subcellularLocation>
    <text evidence="7">Heterodimers with GBP1, GBP2 and GBP5 localize in the compartment of the prenylated GBPs: with GBP1 in a vesicle-like compartment, with GBP2, around the nucleus and with GBP5, at the Golgi apparatus.</text>
</comment>
<comment type="alternative products">
    <event type="alternative splicing"/>
    <isoform>
        <id>Q9H0R5-1</id>
        <name>1</name>
        <sequence type="displayed"/>
    </isoform>
    <isoform>
        <id>Q9H0R5-4</id>
        <name>2</name>
        <name>GBP-3DeltaC</name>
        <sequence type="described" ref="VSP_044360 VSP_044361"/>
    </isoform>
</comment>
<comment type="similarity">
    <text evidence="4">Belongs to the TRAFAC class dynamin-like GTPase superfamily. GB1/RHD3 GTPase family. GB1 subfamily.</text>
</comment>
<comment type="sequence caution" evidence="11">
    <conflict type="miscellaneous discrepancy">
        <sequence resource="EMBL-CDS" id="AAH17992"/>
    </conflict>
    <text>Contaminating sequence. Potential poly-A sequence.</text>
</comment>
<comment type="sequence caution" evidence="11">
    <conflict type="miscellaneous discrepancy">
        <sequence resource="EMBL-CDS" id="CAB66615"/>
    </conflict>
    <text>Unlikely isoform. Aberrant splice sites.</text>
</comment>
<comment type="sequence caution" evidence="11">
    <conflict type="erroneous gene model prediction">
        <sequence resource="EMBL-CDS" id="EAW73151"/>
    </conflict>
</comment>
<accession>Q9H0R5</accession>
<accession>A2A317</accession>
<accession>A6NF86</accession>
<accession>B2RTW0</accession>
<accession>F8UW81</accession>
<accession>Q05D54</accession>
<accession>Q5T8L8</accession>
<accession>Q5T8L9</accession>
<accession>Q6P3V3</accession>
<accession>Q9NV33</accession>
<keyword id="KW-0025">Alternative splicing</keyword>
<keyword id="KW-0051">Antiviral defense</keyword>
<keyword id="KW-0175">Coiled coil</keyword>
<keyword id="KW-0963">Cytoplasm</keyword>
<keyword id="KW-0333">Golgi apparatus</keyword>
<keyword id="KW-0342">GTP-binding</keyword>
<keyword id="KW-0378">Hydrolase</keyword>
<keyword id="KW-0391">Immunity</keyword>
<keyword id="KW-0399">Innate immunity</keyword>
<keyword id="KW-0472">Membrane</keyword>
<keyword id="KW-0547">Nucleotide-binding</keyword>
<keyword id="KW-1267">Proteomics identification</keyword>
<keyword id="KW-1185">Reference proteome</keyword>
<protein>
    <recommendedName>
        <fullName>Guanylate-binding protein 3</fullName>
        <ecNumber evidence="2">3.6.5.-</ecNumber>
    </recommendedName>
    <alternativeName>
        <fullName>GTP-binding protein 3</fullName>
        <shortName>GBP-3</shortName>
    </alternativeName>
    <alternativeName>
        <fullName>Guanine nucleotide-binding protein 3</fullName>
    </alternativeName>
</protein>
<name>GBP3_HUMAN</name>
<proteinExistence type="evidence at protein level"/>
<sequence length="595" mass="68114">MAPEIHMTGPMCLIENTNGELVANPEALKILSAITQPVVVVAIVGLYRTGKSYLMNKLAGKNKGFSLGSTVKSHTKGIWMWCVPHPKKPEHTLVLLDTEGLGDVKKGDNQNDSWIFTLAVLLSSTLVYNSMGTINQQAMDQLYYVTELTHRIRSKSSPDENENEDSADFVSFFPDFVWTLRDFSLDLEADGQPLTPDEYLEYSLKLTQGTSQKDKNFNLPRLCIRKFFPKKKCFVFDLPIHRRKLAQLEKLQDEELDPEFVQQVADFCSYIFSNSKTKTLSGGIKVNGPRLESLVLTYINAISRGDLPCMENAVLALAQIENSAAVQKAIAHYDQQMGQKVQLPAETLQELLDLHRVSEREATEVYMKNSFKDVDHLFQKKLAAQLDKKRDDFCKQNQEASSDRCSALLQVIFSPLEEEVKAGIYSKPGGYCLFIQKLQDLEKKYYEEPRKGIQAEEILQTYLKSKESVTDAILQTDQILTEKEKEIEVECVKAESAQASAKMVEEMQIKYQQMMEEKEKSYQEHVKQLTEKMERERAQLLEEQEKTLTSKLQEQARVLKERCQGESTQLQNEIQKLQKTLKKKTKRYMSHKLKI</sequence>